<gene>
    <name type="primary">ROK1</name>
    <name type="ORF">Kpol_274p7</name>
</gene>
<proteinExistence type="inferred from homology"/>
<keyword id="KW-0067">ATP-binding</keyword>
<keyword id="KW-0347">Helicase</keyword>
<keyword id="KW-0378">Hydrolase</keyword>
<keyword id="KW-0547">Nucleotide-binding</keyword>
<keyword id="KW-0539">Nucleus</keyword>
<keyword id="KW-1185">Reference proteome</keyword>
<keyword id="KW-0690">Ribosome biogenesis</keyword>
<keyword id="KW-0694">RNA-binding</keyword>
<keyword id="KW-0698">rRNA processing</keyword>
<accession>A7TT88</accession>
<dbReference type="EC" id="3.6.4.13"/>
<dbReference type="EMBL" id="DS480550">
    <property type="protein sequence ID" value="EDO14524.1"/>
    <property type="molecule type" value="Genomic_DNA"/>
</dbReference>
<dbReference type="RefSeq" id="XP_001642382.1">
    <property type="nucleotide sequence ID" value="XM_001642332.1"/>
</dbReference>
<dbReference type="SMR" id="A7TT88"/>
<dbReference type="FunCoup" id="A7TT88">
    <property type="interactions" value="1105"/>
</dbReference>
<dbReference type="STRING" id="436907.A7TT88"/>
<dbReference type="GeneID" id="5542524"/>
<dbReference type="KEGG" id="vpo:Kpol_274p7"/>
<dbReference type="eggNOG" id="KOG0344">
    <property type="taxonomic scope" value="Eukaryota"/>
</dbReference>
<dbReference type="HOGENOM" id="CLU_003041_1_4_1"/>
<dbReference type="InParanoid" id="A7TT88"/>
<dbReference type="OMA" id="EMAHSIM"/>
<dbReference type="OrthoDB" id="360161at2759"/>
<dbReference type="PhylomeDB" id="A7TT88"/>
<dbReference type="Proteomes" id="UP000000267">
    <property type="component" value="Unassembled WGS sequence"/>
</dbReference>
<dbReference type="GO" id="GO:0005829">
    <property type="term" value="C:cytosol"/>
    <property type="evidence" value="ECO:0007669"/>
    <property type="project" value="TreeGrafter"/>
</dbReference>
<dbReference type="GO" id="GO:0005730">
    <property type="term" value="C:nucleolus"/>
    <property type="evidence" value="ECO:0007669"/>
    <property type="project" value="UniProtKB-SubCell"/>
</dbReference>
<dbReference type="GO" id="GO:0032040">
    <property type="term" value="C:small-subunit processome"/>
    <property type="evidence" value="ECO:0007669"/>
    <property type="project" value="EnsemblFungi"/>
</dbReference>
<dbReference type="GO" id="GO:0005524">
    <property type="term" value="F:ATP binding"/>
    <property type="evidence" value="ECO:0007669"/>
    <property type="project" value="UniProtKB-KW"/>
</dbReference>
<dbReference type="GO" id="GO:0016887">
    <property type="term" value="F:ATP hydrolysis activity"/>
    <property type="evidence" value="ECO:0007669"/>
    <property type="project" value="RHEA"/>
</dbReference>
<dbReference type="GO" id="GO:0003723">
    <property type="term" value="F:RNA binding"/>
    <property type="evidence" value="ECO:0007669"/>
    <property type="project" value="UniProtKB-KW"/>
</dbReference>
<dbReference type="GO" id="GO:0003724">
    <property type="term" value="F:RNA helicase activity"/>
    <property type="evidence" value="ECO:0007669"/>
    <property type="project" value="UniProtKB-EC"/>
</dbReference>
<dbReference type="GO" id="GO:0000480">
    <property type="term" value="P:endonucleolytic cleavage in 5'-ETS of tricistronic rRNA transcript (SSU-rRNA, 5.8S rRNA, LSU-rRNA)"/>
    <property type="evidence" value="ECO:0007669"/>
    <property type="project" value="EnsemblFungi"/>
</dbReference>
<dbReference type="GO" id="GO:0000447">
    <property type="term" value="P:endonucleolytic cleavage in ITS1 to separate SSU-rRNA from 5.8S rRNA and LSU-rRNA from tricistronic rRNA transcript (SSU-rRNA, 5.8S rRNA, LSU-rRNA)"/>
    <property type="evidence" value="ECO:0007669"/>
    <property type="project" value="EnsemblFungi"/>
</dbReference>
<dbReference type="GO" id="GO:0000472">
    <property type="term" value="P:endonucleolytic cleavage to generate mature 5'-end of SSU-rRNA from (SSU-rRNA, 5.8S rRNA, LSU-rRNA)"/>
    <property type="evidence" value="ECO:0007669"/>
    <property type="project" value="EnsemblFungi"/>
</dbReference>
<dbReference type="GO" id="GO:0048254">
    <property type="term" value="P:snoRNA localization"/>
    <property type="evidence" value="ECO:0007669"/>
    <property type="project" value="EnsemblFungi"/>
</dbReference>
<dbReference type="CDD" id="cd17957">
    <property type="entry name" value="DEADc_DDX52"/>
    <property type="match status" value="1"/>
</dbReference>
<dbReference type="CDD" id="cd18787">
    <property type="entry name" value="SF2_C_DEAD"/>
    <property type="match status" value="1"/>
</dbReference>
<dbReference type="FunFam" id="3.40.50.300:FF:000759">
    <property type="entry name" value="probable ATP-dependent RNA helicase DDX52"/>
    <property type="match status" value="1"/>
</dbReference>
<dbReference type="Gene3D" id="3.40.50.300">
    <property type="entry name" value="P-loop containing nucleotide triphosphate hydrolases"/>
    <property type="match status" value="2"/>
</dbReference>
<dbReference type="InterPro" id="IPR044764">
    <property type="entry name" value="DDX52/Rok1_DEADc"/>
</dbReference>
<dbReference type="InterPro" id="IPR011545">
    <property type="entry name" value="DEAD/DEAH_box_helicase_dom"/>
</dbReference>
<dbReference type="InterPro" id="IPR050079">
    <property type="entry name" value="DEAD_box_RNA_helicase"/>
</dbReference>
<dbReference type="InterPro" id="IPR014001">
    <property type="entry name" value="Helicase_ATP-bd"/>
</dbReference>
<dbReference type="InterPro" id="IPR001650">
    <property type="entry name" value="Helicase_C-like"/>
</dbReference>
<dbReference type="InterPro" id="IPR027417">
    <property type="entry name" value="P-loop_NTPase"/>
</dbReference>
<dbReference type="InterPro" id="IPR000629">
    <property type="entry name" value="RNA-helicase_DEAD-box_CS"/>
</dbReference>
<dbReference type="PANTHER" id="PTHR47959">
    <property type="entry name" value="ATP-DEPENDENT RNA HELICASE RHLE-RELATED"/>
    <property type="match status" value="1"/>
</dbReference>
<dbReference type="PANTHER" id="PTHR47959:SF15">
    <property type="entry name" value="RNA HELICASE"/>
    <property type="match status" value="1"/>
</dbReference>
<dbReference type="Pfam" id="PF00270">
    <property type="entry name" value="DEAD"/>
    <property type="match status" value="1"/>
</dbReference>
<dbReference type="Pfam" id="PF00271">
    <property type="entry name" value="Helicase_C"/>
    <property type="match status" value="1"/>
</dbReference>
<dbReference type="SMART" id="SM00487">
    <property type="entry name" value="DEXDc"/>
    <property type="match status" value="1"/>
</dbReference>
<dbReference type="SMART" id="SM00490">
    <property type="entry name" value="HELICc"/>
    <property type="match status" value="1"/>
</dbReference>
<dbReference type="SUPFAM" id="SSF52540">
    <property type="entry name" value="P-loop containing nucleoside triphosphate hydrolases"/>
    <property type="match status" value="1"/>
</dbReference>
<dbReference type="PROSITE" id="PS00039">
    <property type="entry name" value="DEAD_ATP_HELICASE"/>
    <property type="match status" value="1"/>
</dbReference>
<dbReference type="PROSITE" id="PS51192">
    <property type="entry name" value="HELICASE_ATP_BIND_1"/>
    <property type="match status" value="1"/>
</dbReference>
<dbReference type="PROSITE" id="PS51194">
    <property type="entry name" value="HELICASE_CTER"/>
    <property type="match status" value="1"/>
</dbReference>
<dbReference type="PROSITE" id="PS51195">
    <property type="entry name" value="Q_MOTIF"/>
    <property type="match status" value="1"/>
</dbReference>
<reference key="1">
    <citation type="journal article" date="2007" name="Proc. Natl. Acad. Sci. U.S.A.">
        <title>Independent sorting-out of thousands of duplicated gene pairs in two yeast species descended from a whole-genome duplication.</title>
        <authorList>
            <person name="Scannell D.R."/>
            <person name="Frank A.C."/>
            <person name="Conant G.C."/>
            <person name="Byrne K.P."/>
            <person name="Woolfit M."/>
            <person name="Wolfe K.H."/>
        </authorList>
    </citation>
    <scope>NUCLEOTIDE SEQUENCE [LARGE SCALE GENOMIC DNA]</scope>
    <source>
        <strain>ATCC 22028 / DSM 70294 / BCRC 21397 / CBS 2163 / NBRC 10782 / NRRL Y-8283 / UCD 57-17</strain>
    </source>
</reference>
<evidence type="ECO:0000250" key="1"/>
<evidence type="ECO:0000255" key="2">
    <source>
        <dbReference type="PROSITE-ProRule" id="PRU00541"/>
    </source>
</evidence>
<evidence type="ECO:0000255" key="3">
    <source>
        <dbReference type="PROSITE-ProRule" id="PRU00542"/>
    </source>
</evidence>
<evidence type="ECO:0000256" key="4">
    <source>
        <dbReference type="SAM" id="MobiDB-lite"/>
    </source>
</evidence>
<evidence type="ECO:0000305" key="5"/>
<protein>
    <recommendedName>
        <fullName>ATP-dependent RNA helicase ROK1</fullName>
        <ecNumber>3.6.4.13</ecNumber>
    </recommendedName>
</protein>
<organism>
    <name type="scientific">Vanderwaltozyma polyspora (strain ATCC 22028 / DSM 70294 / BCRC 21397 / CBS 2163 / NBRC 10782 / NRRL Y-8283 / UCD 57-17)</name>
    <name type="common">Kluyveromyces polysporus</name>
    <dbReference type="NCBI Taxonomy" id="436907"/>
    <lineage>
        <taxon>Eukaryota</taxon>
        <taxon>Fungi</taxon>
        <taxon>Dikarya</taxon>
        <taxon>Ascomycota</taxon>
        <taxon>Saccharomycotina</taxon>
        <taxon>Saccharomycetes</taxon>
        <taxon>Saccharomycetales</taxon>
        <taxon>Saccharomycetaceae</taxon>
        <taxon>Vanderwaltozyma</taxon>
    </lineage>
</organism>
<sequence>MDIFRLLTRGASVKKDPKNKNIGDAVENAKASNIEKNDKIAAENQITKELDFFHNKRIINKVNYNKAKETHAEDKEDKDNDNEEDEIKEEESLQYQKPLITNDEEAKLLRKSNKSNVSGEDIPLPIGSFEDLITRFSFDKRLLNNLILNHFTEPTPIQCEAIPLALNNRDMLACAPTGSGKTLAFLIPLIQQVINDKDTQGLKGLIISPTKELANQIFLECIKLSNRIFLDKKRPLQVALLSKSLSAKLRNKVISDKKYDIIVSTPLRLIDVVKNEALDLSQVKHLIFDEADKLFDKTFVEQSDDILSSCSHSSLRKSMFSATIPSNVEEIAKSIMMDPVRVIIGHKEAANTSIEQKLVFCGNEEGKLIAIKQLVQEGEFKPPVIIFLESITRAKALYHEMMYDSLNVDVIHAERTQVQRNKIIERFKSGDLWCLITTDVLARGVDFKGVNLVINYDVPRTAQAYVHRIGRTGRGGRSGKAVTFYTKEDSIAIKPIINVMKQSGSEISEWMEKVSKMTKKEKELVKKGRAHSERKQISTVPKIDKIKRKRKLEMIQASKKRKAIETKETE</sequence>
<name>ROK1_VANPO</name>
<feature type="chain" id="PRO_0000310241" description="ATP-dependent RNA helicase ROK1">
    <location>
        <begin position="1"/>
        <end position="570"/>
    </location>
</feature>
<feature type="domain" description="Helicase ATP-binding" evidence="2">
    <location>
        <begin position="162"/>
        <end position="342"/>
    </location>
</feature>
<feature type="domain" description="Helicase C-terminal" evidence="3">
    <location>
        <begin position="353"/>
        <end position="515"/>
    </location>
</feature>
<feature type="region of interest" description="Disordered" evidence="4">
    <location>
        <begin position="69"/>
        <end position="96"/>
    </location>
</feature>
<feature type="short sequence motif" description="Q motif">
    <location>
        <begin position="131"/>
        <end position="159"/>
    </location>
</feature>
<feature type="short sequence motif" description="DEAD box">
    <location>
        <begin position="289"/>
        <end position="292"/>
    </location>
</feature>
<feature type="compositionally biased region" description="Basic and acidic residues" evidence="4">
    <location>
        <begin position="69"/>
        <end position="78"/>
    </location>
</feature>
<feature type="compositionally biased region" description="Acidic residues" evidence="4">
    <location>
        <begin position="79"/>
        <end position="89"/>
    </location>
</feature>
<feature type="binding site" evidence="2">
    <location>
        <begin position="175"/>
        <end position="182"/>
    </location>
    <ligand>
        <name>ATP</name>
        <dbReference type="ChEBI" id="CHEBI:30616"/>
    </ligand>
</feature>
<comment type="function">
    <text>ATP-dependent RNA helicase involved in 40S ribosomal subunit biogenesis. Required for the processing and cleavage of 35S pre-rRNA at sites A0, A1, and A2, leading to mature 18S rRNA.</text>
</comment>
<comment type="catalytic activity">
    <reaction>
        <text>ATP + H2O = ADP + phosphate + H(+)</text>
        <dbReference type="Rhea" id="RHEA:13065"/>
        <dbReference type="ChEBI" id="CHEBI:15377"/>
        <dbReference type="ChEBI" id="CHEBI:15378"/>
        <dbReference type="ChEBI" id="CHEBI:30616"/>
        <dbReference type="ChEBI" id="CHEBI:43474"/>
        <dbReference type="ChEBI" id="CHEBI:456216"/>
        <dbReference type="EC" id="3.6.4.13"/>
    </reaction>
</comment>
<comment type="subunit">
    <text evidence="1">Interacts with the U3 snoRNA and is associated with the 90S and 40S pre-ribosomes.</text>
</comment>
<comment type="subcellular location">
    <subcellularLocation>
        <location evidence="1">Nucleus</location>
        <location evidence="1">Nucleolus</location>
    </subcellularLocation>
</comment>
<comment type="domain">
    <text>The Q motif is unique to and characteristic of the DEAD box family of RNA helicases and controls ATP binding and hydrolysis.</text>
</comment>
<comment type="similarity">
    <text evidence="5">Belongs to the DEAD box helicase family. DDX52/ROK1 subfamily.</text>
</comment>